<accession>Q9UNZ5</accession>
<accession>B2R4J9</accession>
<protein>
    <recommendedName>
        <fullName>Leydig cell tumor 10 kDa protein homolog</fullName>
    </recommendedName>
</protein>
<feature type="chain" id="PRO_0000084343" description="Leydig cell tumor 10 kDa protein homolog">
    <location>
        <begin position="1"/>
        <end position="99"/>
    </location>
</feature>
<feature type="region of interest" description="Disordered" evidence="2">
    <location>
        <begin position="1"/>
        <end position="36"/>
    </location>
</feature>
<feature type="sequence variant" id="VAR_053783" description="In dbSNP:rs10104.">
    <original>K</original>
    <variation>R</variation>
    <location>
        <position position="39"/>
    </location>
</feature>
<comment type="function">
    <text evidence="1">May have a potential role in hypercalcemia of malignancy.</text>
</comment>
<comment type="similarity">
    <text evidence="3">Belongs to the UPF0390 family.</text>
</comment>
<proteinExistence type="evidence at protein level"/>
<gene>
    <name type="primary">C19orf53</name>
    <name type="ORF">HSPC023</name>
</gene>
<evidence type="ECO:0000250" key="1"/>
<evidence type="ECO:0000256" key="2">
    <source>
        <dbReference type="SAM" id="MobiDB-lite"/>
    </source>
</evidence>
<evidence type="ECO:0000305" key="3"/>
<dbReference type="EMBL" id="AF078852">
    <property type="protein sequence ID" value="AAD44484.1"/>
    <property type="molecule type" value="mRNA"/>
</dbReference>
<dbReference type="EMBL" id="AK311855">
    <property type="protein sequence ID" value="BAG34796.1"/>
    <property type="molecule type" value="mRNA"/>
</dbReference>
<dbReference type="EMBL" id="CH471106">
    <property type="protein sequence ID" value="EAW84372.1"/>
    <property type="molecule type" value="Genomic_DNA"/>
</dbReference>
<dbReference type="EMBL" id="BC015465">
    <property type="protein sequence ID" value="AAH15465.1"/>
    <property type="molecule type" value="mRNA"/>
</dbReference>
<dbReference type="CCDS" id="CCDS12298.1"/>
<dbReference type="RefSeq" id="NP_054766.1">
    <property type="nucleotide sequence ID" value="NM_014047.3"/>
</dbReference>
<dbReference type="PDB" id="8FLA">
    <property type="method" value="EM"/>
    <property type="resolution" value="2.63 A"/>
    <property type="chains" value="VB=1-99"/>
</dbReference>
<dbReference type="PDB" id="8FLB">
    <property type="method" value="EM"/>
    <property type="resolution" value="2.55 A"/>
    <property type="chains" value="VB=1-99"/>
</dbReference>
<dbReference type="PDB" id="8FLC">
    <property type="method" value="EM"/>
    <property type="resolution" value="2.76 A"/>
    <property type="chains" value="VB=1-99"/>
</dbReference>
<dbReference type="PDB" id="8IDT">
    <property type="method" value="EM"/>
    <property type="resolution" value="2.80 A"/>
    <property type="chains" value="T=1-99"/>
</dbReference>
<dbReference type="PDB" id="8IDY">
    <property type="method" value="EM"/>
    <property type="resolution" value="3.00 A"/>
    <property type="chains" value="T=1-99"/>
</dbReference>
<dbReference type="PDB" id="8INE">
    <property type="method" value="EM"/>
    <property type="resolution" value="3.20 A"/>
    <property type="chains" value="T=1-99"/>
</dbReference>
<dbReference type="PDB" id="8INF">
    <property type="method" value="EM"/>
    <property type="resolution" value="3.00 A"/>
    <property type="chains" value="T=1-99"/>
</dbReference>
<dbReference type="PDBsum" id="8FLA"/>
<dbReference type="PDBsum" id="8FLB"/>
<dbReference type="PDBsum" id="8FLC"/>
<dbReference type="PDBsum" id="8IDT"/>
<dbReference type="PDBsum" id="8IDY"/>
<dbReference type="PDBsum" id="8INE"/>
<dbReference type="PDBsum" id="8INF"/>
<dbReference type="EMDB" id="EMD-29272"/>
<dbReference type="EMDB" id="EMD-29273"/>
<dbReference type="EMDB" id="EMD-29274"/>
<dbReference type="EMDB" id="EMD-35370"/>
<dbReference type="EMDB" id="EMD-35371"/>
<dbReference type="EMDB" id="EMD-35596"/>
<dbReference type="EMDB" id="EMD-35597"/>
<dbReference type="SMR" id="Q9UNZ5"/>
<dbReference type="BioGRID" id="118798">
    <property type="interactions" value="32"/>
</dbReference>
<dbReference type="DIP" id="DIP-61980N"/>
<dbReference type="FunCoup" id="Q9UNZ5">
    <property type="interactions" value="295"/>
</dbReference>
<dbReference type="IntAct" id="Q9UNZ5">
    <property type="interactions" value="13"/>
</dbReference>
<dbReference type="MINT" id="Q9UNZ5"/>
<dbReference type="STRING" id="9606.ENSP00000465432"/>
<dbReference type="GlyGen" id="Q9UNZ5">
    <property type="glycosylation" value="1 site, 1 O-linked glycan (1 site)"/>
</dbReference>
<dbReference type="iPTMnet" id="Q9UNZ5"/>
<dbReference type="PhosphoSitePlus" id="Q9UNZ5"/>
<dbReference type="BioMuta" id="C19orf53"/>
<dbReference type="DMDM" id="17369716"/>
<dbReference type="jPOST" id="Q9UNZ5"/>
<dbReference type="MassIVE" id="Q9UNZ5"/>
<dbReference type="PaxDb" id="9606-ENSP00000465432"/>
<dbReference type="PeptideAtlas" id="Q9UNZ5"/>
<dbReference type="ProteomicsDB" id="85350"/>
<dbReference type="Pumba" id="Q9UNZ5"/>
<dbReference type="TopDownProteomics" id="Q9UNZ5"/>
<dbReference type="Antibodypedia" id="71794">
    <property type="antibodies" value="35 antibodies from 10 providers"/>
</dbReference>
<dbReference type="DNASU" id="28974"/>
<dbReference type="Ensembl" id="ENST00000588234.6">
    <property type="protein sequence ID" value="ENSP00000465432.1"/>
    <property type="gene ID" value="ENSG00000104979.9"/>
</dbReference>
<dbReference type="GeneID" id="28974"/>
<dbReference type="KEGG" id="hsa:28974"/>
<dbReference type="MANE-Select" id="ENST00000588234.6">
    <property type="protein sequence ID" value="ENSP00000465432.1"/>
    <property type="RefSeq nucleotide sequence ID" value="NM_014047.3"/>
    <property type="RefSeq protein sequence ID" value="NP_054766.1"/>
</dbReference>
<dbReference type="UCSC" id="uc002mxg.4">
    <property type="organism name" value="human"/>
</dbReference>
<dbReference type="AGR" id="HGNC:24991"/>
<dbReference type="CTD" id="28974"/>
<dbReference type="GeneCards" id="C19orf53"/>
<dbReference type="HGNC" id="HGNC:24991">
    <property type="gene designation" value="C19orf53"/>
</dbReference>
<dbReference type="HPA" id="ENSG00000104979">
    <property type="expression patterns" value="Low tissue specificity"/>
</dbReference>
<dbReference type="MIM" id="620685">
    <property type="type" value="gene"/>
</dbReference>
<dbReference type="neXtProt" id="NX_Q9UNZ5"/>
<dbReference type="OpenTargets" id="ENSG00000104979"/>
<dbReference type="PharmGKB" id="PA147358407"/>
<dbReference type="VEuPathDB" id="HostDB:ENSG00000104979"/>
<dbReference type="eggNOG" id="ENOG502S8BT">
    <property type="taxonomic scope" value="Eukaryota"/>
</dbReference>
<dbReference type="GeneTree" id="ENSGT00390000011740"/>
<dbReference type="HOGENOM" id="CLU_182392_0_0_1"/>
<dbReference type="InParanoid" id="Q9UNZ5"/>
<dbReference type="OMA" id="IEHETAM"/>
<dbReference type="OrthoDB" id="5239630at2759"/>
<dbReference type="PAN-GO" id="Q9UNZ5">
    <property type="GO annotations" value="0 GO annotations based on evolutionary models"/>
</dbReference>
<dbReference type="PhylomeDB" id="Q9UNZ5"/>
<dbReference type="PathwayCommons" id="Q9UNZ5"/>
<dbReference type="SignaLink" id="Q9UNZ5"/>
<dbReference type="BioGRID-ORCS" id="28974">
    <property type="hits" value="527 hits in 1136 CRISPR screens"/>
</dbReference>
<dbReference type="CD-CODE" id="91857CE7">
    <property type="entry name" value="Nucleolus"/>
</dbReference>
<dbReference type="ChiTaRS" id="C19orf53">
    <property type="organism name" value="human"/>
</dbReference>
<dbReference type="GenomeRNAi" id="28974"/>
<dbReference type="Pharos" id="Q9UNZ5">
    <property type="development level" value="Tdark"/>
</dbReference>
<dbReference type="PRO" id="PR:Q9UNZ5"/>
<dbReference type="Proteomes" id="UP000005640">
    <property type="component" value="Chromosome 19"/>
</dbReference>
<dbReference type="RNAct" id="Q9UNZ5">
    <property type="molecule type" value="protein"/>
</dbReference>
<dbReference type="Bgee" id="ENSG00000104979">
    <property type="expression patterns" value="Expressed in hindlimb stylopod muscle and 201 other cell types or tissues"/>
</dbReference>
<dbReference type="ExpressionAtlas" id="Q9UNZ5">
    <property type="expression patterns" value="baseline and differential"/>
</dbReference>
<dbReference type="InterPro" id="IPR019034">
    <property type="entry name" value="UPF0390"/>
</dbReference>
<dbReference type="PANTHER" id="PTHR16967">
    <property type="entry name" value="LEYDIG CELL TUMOR 10 KDA PROTEIN HOMOLOG"/>
    <property type="match status" value="1"/>
</dbReference>
<dbReference type="PANTHER" id="PTHR16967:SF1">
    <property type="entry name" value="LEYDIG CELL TUMOR 10 KDA PROTEIN HOMOLOG"/>
    <property type="match status" value="1"/>
</dbReference>
<dbReference type="Pfam" id="PF09495">
    <property type="entry name" value="DUF2462"/>
    <property type="match status" value="1"/>
</dbReference>
<reference key="1">
    <citation type="journal article" date="2000" name="Genome Res.">
        <title>Cloning and functional analysis of cDNAs with open reading frames for 300 previously undefined genes expressed in CD34+ hematopoietic stem/progenitor cells.</title>
        <authorList>
            <person name="Zhang Q.-H."/>
            <person name="Ye M."/>
            <person name="Wu X.-Y."/>
            <person name="Ren S.-X."/>
            <person name="Zhao M."/>
            <person name="Zhao C.-J."/>
            <person name="Fu G."/>
            <person name="Shen Y."/>
            <person name="Fan H.-Y."/>
            <person name="Lu G."/>
            <person name="Zhong M."/>
            <person name="Xu X.-R."/>
            <person name="Han Z.-G."/>
            <person name="Zhang J.-W."/>
            <person name="Tao J."/>
            <person name="Huang Q.-H."/>
            <person name="Zhou J."/>
            <person name="Hu G.-X."/>
            <person name="Gu J."/>
            <person name="Chen S.-J."/>
            <person name="Chen Z."/>
        </authorList>
    </citation>
    <scope>NUCLEOTIDE SEQUENCE [LARGE SCALE MRNA]</scope>
    <source>
        <tissue>Umbilical cord blood</tissue>
    </source>
</reference>
<reference key="2">
    <citation type="journal article" date="2004" name="Nat. Genet.">
        <title>Complete sequencing and characterization of 21,243 full-length human cDNAs.</title>
        <authorList>
            <person name="Ota T."/>
            <person name="Suzuki Y."/>
            <person name="Nishikawa T."/>
            <person name="Otsuki T."/>
            <person name="Sugiyama T."/>
            <person name="Irie R."/>
            <person name="Wakamatsu A."/>
            <person name="Hayashi K."/>
            <person name="Sato H."/>
            <person name="Nagai K."/>
            <person name="Kimura K."/>
            <person name="Makita H."/>
            <person name="Sekine M."/>
            <person name="Obayashi M."/>
            <person name="Nishi T."/>
            <person name="Shibahara T."/>
            <person name="Tanaka T."/>
            <person name="Ishii S."/>
            <person name="Yamamoto J."/>
            <person name="Saito K."/>
            <person name="Kawai Y."/>
            <person name="Isono Y."/>
            <person name="Nakamura Y."/>
            <person name="Nagahari K."/>
            <person name="Murakami K."/>
            <person name="Yasuda T."/>
            <person name="Iwayanagi T."/>
            <person name="Wagatsuma M."/>
            <person name="Shiratori A."/>
            <person name="Sudo H."/>
            <person name="Hosoiri T."/>
            <person name="Kaku Y."/>
            <person name="Kodaira H."/>
            <person name="Kondo H."/>
            <person name="Sugawara M."/>
            <person name="Takahashi M."/>
            <person name="Kanda K."/>
            <person name="Yokoi T."/>
            <person name="Furuya T."/>
            <person name="Kikkawa E."/>
            <person name="Omura Y."/>
            <person name="Abe K."/>
            <person name="Kamihara K."/>
            <person name="Katsuta N."/>
            <person name="Sato K."/>
            <person name="Tanikawa M."/>
            <person name="Yamazaki M."/>
            <person name="Ninomiya K."/>
            <person name="Ishibashi T."/>
            <person name="Yamashita H."/>
            <person name="Murakawa K."/>
            <person name="Fujimori K."/>
            <person name="Tanai H."/>
            <person name="Kimata M."/>
            <person name="Watanabe M."/>
            <person name="Hiraoka S."/>
            <person name="Chiba Y."/>
            <person name="Ishida S."/>
            <person name="Ono Y."/>
            <person name="Takiguchi S."/>
            <person name="Watanabe S."/>
            <person name="Yosida M."/>
            <person name="Hotuta T."/>
            <person name="Kusano J."/>
            <person name="Kanehori K."/>
            <person name="Takahashi-Fujii A."/>
            <person name="Hara H."/>
            <person name="Tanase T.-O."/>
            <person name="Nomura Y."/>
            <person name="Togiya S."/>
            <person name="Komai F."/>
            <person name="Hara R."/>
            <person name="Takeuchi K."/>
            <person name="Arita M."/>
            <person name="Imose N."/>
            <person name="Musashino K."/>
            <person name="Yuuki H."/>
            <person name="Oshima A."/>
            <person name="Sasaki N."/>
            <person name="Aotsuka S."/>
            <person name="Yoshikawa Y."/>
            <person name="Matsunawa H."/>
            <person name="Ichihara T."/>
            <person name="Shiohata N."/>
            <person name="Sano S."/>
            <person name="Moriya S."/>
            <person name="Momiyama H."/>
            <person name="Satoh N."/>
            <person name="Takami S."/>
            <person name="Terashima Y."/>
            <person name="Suzuki O."/>
            <person name="Nakagawa S."/>
            <person name="Senoh A."/>
            <person name="Mizoguchi H."/>
            <person name="Goto Y."/>
            <person name="Shimizu F."/>
            <person name="Wakebe H."/>
            <person name="Hishigaki H."/>
            <person name="Watanabe T."/>
            <person name="Sugiyama A."/>
            <person name="Takemoto M."/>
            <person name="Kawakami B."/>
            <person name="Yamazaki M."/>
            <person name="Watanabe K."/>
            <person name="Kumagai A."/>
            <person name="Itakura S."/>
            <person name="Fukuzumi Y."/>
            <person name="Fujimori Y."/>
            <person name="Komiyama M."/>
            <person name="Tashiro H."/>
            <person name="Tanigami A."/>
            <person name="Fujiwara T."/>
            <person name="Ono T."/>
            <person name="Yamada K."/>
            <person name="Fujii Y."/>
            <person name="Ozaki K."/>
            <person name="Hirao M."/>
            <person name="Ohmori Y."/>
            <person name="Kawabata A."/>
            <person name="Hikiji T."/>
            <person name="Kobatake N."/>
            <person name="Inagaki H."/>
            <person name="Ikema Y."/>
            <person name="Okamoto S."/>
            <person name="Okitani R."/>
            <person name="Kawakami T."/>
            <person name="Noguchi S."/>
            <person name="Itoh T."/>
            <person name="Shigeta K."/>
            <person name="Senba T."/>
            <person name="Matsumura K."/>
            <person name="Nakajima Y."/>
            <person name="Mizuno T."/>
            <person name="Morinaga M."/>
            <person name="Sasaki M."/>
            <person name="Togashi T."/>
            <person name="Oyama M."/>
            <person name="Hata H."/>
            <person name="Watanabe M."/>
            <person name="Komatsu T."/>
            <person name="Mizushima-Sugano J."/>
            <person name="Satoh T."/>
            <person name="Shirai Y."/>
            <person name="Takahashi Y."/>
            <person name="Nakagawa K."/>
            <person name="Okumura K."/>
            <person name="Nagase T."/>
            <person name="Nomura N."/>
            <person name="Kikuchi H."/>
            <person name="Masuho Y."/>
            <person name="Yamashita R."/>
            <person name="Nakai K."/>
            <person name="Yada T."/>
            <person name="Nakamura Y."/>
            <person name="Ohara O."/>
            <person name="Isogai T."/>
            <person name="Sugano S."/>
        </authorList>
    </citation>
    <scope>NUCLEOTIDE SEQUENCE [LARGE SCALE MRNA]</scope>
    <source>
        <tissue>Tongue</tissue>
    </source>
</reference>
<reference key="3">
    <citation type="submission" date="2005-07" db="EMBL/GenBank/DDBJ databases">
        <authorList>
            <person name="Mural R.J."/>
            <person name="Istrail S."/>
            <person name="Sutton G.G."/>
            <person name="Florea L."/>
            <person name="Halpern A.L."/>
            <person name="Mobarry C.M."/>
            <person name="Lippert R."/>
            <person name="Walenz B."/>
            <person name="Shatkay H."/>
            <person name="Dew I."/>
            <person name="Miller J.R."/>
            <person name="Flanigan M.J."/>
            <person name="Edwards N.J."/>
            <person name="Bolanos R."/>
            <person name="Fasulo D."/>
            <person name="Halldorsson B.V."/>
            <person name="Hannenhalli S."/>
            <person name="Turner R."/>
            <person name="Yooseph S."/>
            <person name="Lu F."/>
            <person name="Nusskern D.R."/>
            <person name="Shue B.C."/>
            <person name="Zheng X.H."/>
            <person name="Zhong F."/>
            <person name="Delcher A.L."/>
            <person name="Huson D.H."/>
            <person name="Kravitz S.A."/>
            <person name="Mouchard L."/>
            <person name="Reinert K."/>
            <person name="Remington K.A."/>
            <person name="Clark A.G."/>
            <person name="Waterman M.S."/>
            <person name="Eichler E.E."/>
            <person name="Adams M.D."/>
            <person name="Hunkapiller M.W."/>
            <person name="Myers E.W."/>
            <person name="Venter J.C."/>
        </authorList>
    </citation>
    <scope>NUCLEOTIDE SEQUENCE [LARGE SCALE GENOMIC DNA]</scope>
</reference>
<reference key="4">
    <citation type="journal article" date="2004" name="Genome Res.">
        <title>The status, quality, and expansion of the NIH full-length cDNA project: the Mammalian Gene Collection (MGC).</title>
        <authorList>
            <consortium name="The MGC Project Team"/>
        </authorList>
    </citation>
    <scope>NUCLEOTIDE SEQUENCE [LARGE SCALE MRNA]</scope>
    <source>
        <tissue>Uterus</tissue>
    </source>
</reference>
<reference key="5">
    <citation type="journal article" date="2011" name="BMC Syst. Biol.">
        <title>Initial characterization of the human central proteome.</title>
        <authorList>
            <person name="Burkard T.R."/>
            <person name="Planyavsky M."/>
            <person name="Kaupe I."/>
            <person name="Breitwieser F.P."/>
            <person name="Buerckstuemmer T."/>
            <person name="Bennett K.L."/>
            <person name="Superti-Furga G."/>
            <person name="Colinge J."/>
        </authorList>
    </citation>
    <scope>IDENTIFICATION BY MASS SPECTROMETRY [LARGE SCALE ANALYSIS]</scope>
</reference>
<sequence length="99" mass="10577">MAQGQRKFQAHKPAKSKTAAAASEKNRGPRKGGRVIAPKKARVVQQQKLKKNLEVGIRKKIEHDVVMKASSSLPKKLALLKAPAKKKGAAAATSSKTPS</sequence>
<keyword id="KW-0002">3D-structure</keyword>
<keyword id="KW-1267">Proteomics identification</keyword>
<keyword id="KW-1185">Reference proteome</keyword>
<name>L10K_HUMAN</name>
<organism>
    <name type="scientific">Homo sapiens</name>
    <name type="common">Human</name>
    <dbReference type="NCBI Taxonomy" id="9606"/>
    <lineage>
        <taxon>Eukaryota</taxon>
        <taxon>Metazoa</taxon>
        <taxon>Chordata</taxon>
        <taxon>Craniata</taxon>
        <taxon>Vertebrata</taxon>
        <taxon>Euteleostomi</taxon>
        <taxon>Mammalia</taxon>
        <taxon>Eutheria</taxon>
        <taxon>Euarchontoglires</taxon>
        <taxon>Primates</taxon>
        <taxon>Haplorrhini</taxon>
        <taxon>Catarrhini</taxon>
        <taxon>Hominidae</taxon>
        <taxon>Homo</taxon>
    </lineage>
</organism>